<dbReference type="EMBL" id="CP000950">
    <property type="protein sequence ID" value="ACA70051.1"/>
    <property type="molecule type" value="Genomic_DNA"/>
</dbReference>
<dbReference type="RefSeq" id="WP_002210153.1">
    <property type="nucleotide sequence ID" value="NZ_CP009792.1"/>
</dbReference>
<dbReference type="SMR" id="B1JMM4"/>
<dbReference type="GeneID" id="97457911"/>
<dbReference type="KEGG" id="ypy:YPK_3784"/>
<dbReference type="PATRIC" id="fig|502800.11.peg.134"/>
<dbReference type="GO" id="GO:0022627">
    <property type="term" value="C:cytosolic small ribosomal subunit"/>
    <property type="evidence" value="ECO:0007669"/>
    <property type="project" value="TreeGrafter"/>
</dbReference>
<dbReference type="GO" id="GO:0070181">
    <property type="term" value="F:small ribosomal subunit rRNA binding"/>
    <property type="evidence" value="ECO:0007669"/>
    <property type="project" value="TreeGrafter"/>
</dbReference>
<dbReference type="GO" id="GO:0003735">
    <property type="term" value="F:structural constituent of ribosome"/>
    <property type="evidence" value="ECO:0007669"/>
    <property type="project" value="InterPro"/>
</dbReference>
<dbReference type="GO" id="GO:0006412">
    <property type="term" value="P:translation"/>
    <property type="evidence" value="ECO:0007669"/>
    <property type="project" value="UniProtKB-UniRule"/>
</dbReference>
<dbReference type="CDD" id="cd00473">
    <property type="entry name" value="bS6"/>
    <property type="match status" value="1"/>
</dbReference>
<dbReference type="FunFam" id="3.30.70.60:FF:000003">
    <property type="entry name" value="30S ribosomal protein S6"/>
    <property type="match status" value="1"/>
</dbReference>
<dbReference type="Gene3D" id="3.30.70.60">
    <property type="match status" value="1"/>
</dbReference>
<dbReference type="HAMAP" id="MF_00360">
    <property type="entry name" value="Ribosomal_bS6"/>
    <property type="match status" value="1"/>
</dbReference>
<dbReference type="InterPro" id="IPR000529">
    <property type="entry name" value="Ribosomal_bS6"/>
</dbReference>
<dbReference type="InterPro" id="IPR020815">
    <property type="entry name" value="Ribosomal_bS6_CS"/>
</dbReference>
<dbReference type="InterPro" id="IPR035980">
    <property type="entry name" value="Ribosomal_bS6_sf"/>
</dbReference>
<dbReference type="InterPro" id="IPR020814">
    <property type="entry name" value="Ribosomal_S6_plastid/chlpt"/>
</dbReference>
<dbReference type="InterPro" id="IPR014717">
    <property type="entry name" value="Transl_elong_EF1B/ribsomal_bS6"/>
</dbReference>
<dbReference type="NCBIfam" id="TIGR00166">
    <property type="entry name" value="S6"/>
    <property type="match status" value="1"/>
</dbReference>
<dbReference type="PANTHER" id="PTHR21011">
    <property type="entry name" value="MITOCHONDRIAL 28S RIBOSOMAL PROTEIN S6"/>
    <property type="match status" value="1"/>
</dbReference>
<dbReference type="PANTHER" id="PTHR21011:SF1">
    <property type="entry name" value="SMALL RIBOSOMAL SUBUNIT PROTEIN BS6M"/>
    <property type="match status" value="1"/>
</dbReference>
<dbReference type="Pfam" id="PF01250">
    <property type="entry name" value="Ribosomal_S6"/>
    <property type="match status" value="1"/>
</dbReference>
<dbReference type="SUPFAM" id="SSF54995">
    <property type="entry name" value="Ribosomal protein S6"/>
    <property type="match status" value="1"/>
</dbReference>
<dbReference type="PROSITE" id="PS01048">
    <property type="entry name" value="RIBOSOMAL_S6"/>
    <property type="match status" value="1"/>
</dbReference>
<keyword id="KW-0687">Ribonucleoprotein</keyword>
<keyword id="KW-0689">Ribosomal protein</keyword>
<keyword id="KW-0694">RNA-binding</keyword>
<keyword id="KW-0699">rRNA-binding</keyword>
<protein>
    <recommendedName>
        <fullName evidence="1">Small ribosomal subunit protein bS6</fullName>
    </recommendedName>
    <alternativeName>
        <fullName evidence="3">30S ribosomal protein S6</fullName>
    </alternativeName>
</protein>
<accession>B1JMM4</accession>
<sequence length="130" mass="15008">MRHYEIVFMVHPDQSEQVPGMIERYSATITNAAGTIHRLEDWGRRQLAYPINKLHKAHYVLLNVEAPQEAIDELETNFRFNDAVIRSMVMRVKHAVTEASPMVKAKDERRERHDFASEANDDSEAGDSEE</sequence>
<gene>
    <name evidence="1" type="primary">rpsF</name>
    <name type="ordered locus">YPK_3784</name>
</gene>
<evidence type="ECO:0000255" key="1">
    <source>
        <dbReference type="HAMAP-Rule" id="MF_00360"/>
    </source>
</evidence>
<evidence type="ECO:0000256" key="2">
    <source>
        <dbReference type="SAM" id="MobiDB-lite"/>
    </source>
</evidence>
<evidence type="ECO:0000305" key="3"/>
<name>RS6_YERPY</name>
<comment type="function">
    <text evidence="1">Binds together with bS18 to 16S ribosomal RNA.</text>
</comment>
<comment type="similarity">
    <text evidence="1">Belongs to the bacterial ribosomal protein bS6 family.</text>
</comment>
<proteinExistence type="inferred from homology"/>
<organism>
    <name type="scientific">Yersinia pseudotuberculosis serotype O:3 (strain YPIII)</name>
    <dbReference type="NCBI Taxonomy" id="502800"/>
    <lineage>
        <taxon>Bacteria</taxon>
        <taxon>Pseudomonadati</taxon>
        <taxon>Pseudomonadota</taxon>
        <taxon>Gammaproteobacteria</taxon>
        <taxon>Enterobacterales</taxon>
        <taxon>Yersiniaceae</taxon>
        <taxon>Yersinia</taxon>
    </lineage>
</organism>
<feature type="chain" id="PRO_1000120829" description="Small ribosomal subunit protein bS6">
    <location>
        <begin position="1"/>
        <end position="130"/>
    </location>
</feature>
<feature type="region of interest" description="Disordered" evidence="2">
    <location>
        <begin position="99"/>
        <end position="130"/>
    </location>
</feature>
<feature type="compositionally biased region" description="Basic and acidic residues" evidence="2">
    <location>
        <begin position="104"/>
        <end position="116"/>
    </location>
</feature>
<feature type="compositionally biased region" description="Acidic residues" evidence="2">
    <location>
        <begin position="119"/>
        <end position="130"/>
    </location>
</feature>
<reference key="1">
    <citation type="submission" date="2008-02" db="EMBL/GenBank/DDBJ databases">
        <title>Complete sequence of Yersinia pseudotuberculosis YPIII.</title>
        <authorList>
            <consortium name="US DOE Joint Genome Institute"/>
            <person name="Copeland A."/>
            <person name="Lucas S."/>
            <person name="Lapidus A."/>
            <person name="Glavina del Rio T."/>
            <person name="Dalin E."/>
            <person name="Tice H."/>
            <person name="Bruce D."/>
            <person name="Goodwin L."/>
            <person name="Pitluck S."/>
            <person name="Munk A.C."/>
            <person name="Brettin T."/>
            <person name="Detter J.C."/>
            <person name="Han C."/>
            <person name="Tapia R."/>
            <person name="Schmutz J."/>
            <person name="Larimer F."/>
            <person name="Land M."/>
            <person name="Hauser L."/>
            <person name="Challacombe J.F."/>
            <person name="Green L."/>
            <person name="Lindler L.E."/>
            <person name="Nikolich M.P."/>
            <person name="Richardson P."/>
        </authorList>
    </citation>
    <scope>NUCLEOTIDE SEQUENCE [LARGE SCALE GENOMIC DNA]</scope>
    <source>
        <strain>YPIII</strain>
    </source>
</reference>